<name>Y5078_DROME</name>
<accession>C0HK94</accession>
<accession>Q95S18</accession>
<accession>Q9VGX1</accession>
<accession>Q9VGX2</accession>
<accession>Q9VGX3</accession>
<accession>Q9Y0F9</accession>
<keyword id="KW-1185">Reference proteome</keyword>
<proteinExistence type="predicted"/>
<reference key="1">
    <citation type="journal article" date="2000" name="Science">
        <title>The genome sequence of Drosophila melanogaster.</title>
        <authorList>
            <person name="Adams M.D."/>
            <person name="Celniker S.E."/>
            <person name="Holt R.A."/>
            <person name="Evans C.A."/>
            <person name="Gocayne J.D."/>
            <person name="Amanatides P.G."/>
            <person name="Scherer S.E."/>
            <person name="Li P.W."/>
            <person name="Hoskins R.A."/>
            <person name="Galle R.F."/>
            <person name="George R.A."/>
            <person name="Lewis S.E."/>
            <person name="Richards S."/>
            <person name="Ashburner M."/>
            <person name="Henderson S.N."/>
            <person name="Sutton G.G."/>
            <person name="Wortman J.R."/>
            <person name="Yandell M.D."/>
            <person name="Zhang Q."/>
            <person name="Chen L.X."/>
            <person name="Brandon R.C."/>
            <person name="Rogers Y.-H.C."/>
            <person name="Blazej R.G."/>
            <person name="Champe M."/>
            <person name="Pfeiffer B.D."/>
            <person name="Wan K.H."/>
            <person name="Doyle C."/>
            <person name="Baxter E.G."/>
            <person name="Helt G."/>
            <person name="Nelson C.R."/>
            <person name="Miklos G.L.G."/>
            <person name="Abril J.F."/>
            <person name="Agbayani A."/>
            <person name="An H.-J."/>
            <person name="Andrews-Pfannkoch C."/>
            <person name="Baldwin D."/>
            <person name="Ballew R.M."/>
            <person name="Basu A."/>
            <person name="Baxendale J."/>
            <person name="Bayraktaroglu L."/>
            <person name="Beasley E.M."/>
            <person name="Beeson K.Y."/>
            <person name="Benos P.V."/>
            <person name="Berman B.P."/>
            <person name="Bhandari D."/>
            <person name="Bolshakov S."/>
            <person name="Borkova D."/>
            <person name="Botchan M.R."/>
            <person name="Bouck J."/>
            <person name="Brokstein P."/>
            <person name="Brottier P."/>
            <person name="Burtis K.C."/>
            <person name="Busam D.A."/>
            <person name="Butler H."/>
            <person name="Cadieu E."/>
            <person name="Center A."/>
            <person name="Chandra I."/>
            <person name="Cherry J.M."/>
            <person name="Cawley S."/>
            <person name="Dahlke C."/>
            <person name="Davenport L.B."/>
            <person name="Davies P."/>
            <person name="de Pablos B."/>
            <person name="Delcher A."/>
            <person name="Deng Z."/>
            <person name="Mays A.D."/>
            <person name="Dew I."/>
            <person name="Dietz S.M."/>
            <person name="Dodson K."/>
            <person name="Doup L.E."/>
            <person name="Downes M."/>
            <person name="Dugan-Rocha S."/>
            <person name="Dunkov B.C."/>
            <person name="Dunn P."/>
            <person name="Durbin K.J."/>
            <person name="Evangelista C.C."/>
            <person name="Ferraz C."/>
            <person name="Ferriera S."/>
            <person name="Fleischmann W."/>
            <person name="Fosler C."/>
            <person name="Gabrielian A.E."/>
            <person name="Garg N.S."/>
            <person name="Gelbart W.M."/>
            <person name="Glasser K."/>
            <person name="Glodek A."/>
            <person name="Gong F."/>
            <person name="Gorrell J.H."/>
            <person name="Gu Z."/>
            <person name="Guan P."/>
            <person name="Harris M."/>
            <person name="Harris N.L."/>
            <person name="Harvey D.A."/>
            <person name="Heiman T.J."/>
            <person name="Hernandez J.R."/>
            <person name="Houck J."/>
            <person name="Hostin D."/>
            <person name="Houston K.A."/>
            <person name="Howland T.J."/>
            <person name="Wei M.-H."/>
            <person name="Ibegwam C."/>
            <person name="Jalali M."/>
            <person name="Kalush F."/>
            <person name="Karpen G.H."/>
            <person name="Ke Z."/>
            <person name="Kennison J.A."/>
            <person name="Ketchum K.A."/>
            <person name="Kimmel B.E."/>
            <person name="Kodira C.D."/>
            <person name="Kraft C.L."/>
            <person name="Kravitz S."/>
            <person name="Kulp D."/>
            <person name="Lai Z."/>
            <person name="Lasko P."/>
            <person name="Lei Y."/>
            <person name="Levitsky A.A."/>
            <person name="Li J.H."/>
            <person name="Li Z."/>
            <person name="Liang Y."/>
            <person name="Lin X."/>
            <person name="Liu X."/>
            <person name="Mattei B."/>
            <person name="McIntosh T.C."/>
            <person name="McLeod M.P."/>
            <person name="McPherson D."/>
            <person name="Merkulov G."/>
            <person name="Milshina N.V."/>
            <person name="Mobarry C."/>
            <person name="Morris J."/>
            <person name="Moshrefi A."/>
            <person name="Mount S.M."/>
            <person name="Moy M."/>
            <person name="Murphy B."/>
            <person name="Murphy L."/>
            <person name="Muzny D.M."/>
            <person name="Nelson D.L."/>
            <person name="Nelson D.R."/>
            <person name="Nelson K.A."/>
            <person name="Nixon K."/>
            <person name="Nusskern D.R."/>
            <person name="Pacleb J.M."/>
            <person name="Palazzolo M."/>
            <person name="Pittman G.S."/>
            <person name="Pan S."/>
            <person name="Pollard J."/>
            <person name="Puri V."/>
            <person name="Reese M.G."/>
            <person name="Reinert K."/>
            <person name="Remington K."/>
            <person name="Saunders R.D.C."/>
            <person name="Scheeler F."/>
            <person name="Shen H."/>
            <person name="Shue B.C."/>
            <person name="Siden-Kiamos I."/>
            <person name="Simpson M."/>
            <person name="Skupski M.P."/>
            <person name="Smith T.J."/>
            <person name="Spier E."/>
            <person name="Spradling A.C."/>
            <person name="Stapleton M."/>
            <person name="Strong R."/>
            <person name="Sun E."/>
            <person name="Svirskas R."/>
            <person name="Tector C."/>
            <person name="Turner R."/>
            <person name="Venter E."/>
            <person name="Wang A.H."/>
            <person name="Wang X."/>
            <person name="Wang Z.-Y."/>
            <person name="Wassarman D.A."/>
            <person name="Weinstock G.M."/>
            <person name="Weissenbach J."/>
            <person name="Williams S.M."/>
            <person name="Woodage T."/>
            <person name="Worley K.C."/>
            <person name="Wu D."/>
            <person name="Yang S."/>
            <person name="Yao Q.A."/>
            <person name="Ye J."/>
            <person name="Yeh R.-F."/>
            <person name="Zaveri J.S."/>
            <person name="Zhan M."/>
            <person name="Zhang G."/>
            <person name="Zhao Q."/>
            <person name="Zheng L."/>
            <person name="Zheng X.H."/>
            <person name="Zhong F.N."/>
            <person name="Zhong W."/>
            <person name="Zhou X."/>
            <person name="Zhu S.C."/>
            <person name="Zhu X."/>
            <person name="Smith H.O."/>
            <person name="Gibbs R.A."/>
            <person name="Myers E.W."/>
            <person name="Rubin G.M."/>
            <person name="Venter J.C."/>
        </authorList>
    </citation>
    <scope>NUCLEOTIDE SEQUENCE [LARGE SCALE GENOMIC DNA]</scope>
    <source>
        <strain>Berkeley</strain>
    </source>
</reference>
<reference key="2">
    <citation type="journal article" date="2002" name="Genome Biol.">
        <title>Annotation of the Drosophila melanogaster euchromatic genome: a systematic review.</title>
        <authorList>
            <person name="Misra S."/>
            <person name="Crosby M.A."/>
            <person name="Mungall C.J."/>
            <person name="Matthews B.B."/>
            <person name="Campbell K.S."/>
            <person name="Hradecky P."/>
            <person name="Huang Y."/>
            <person name="Kaminker J.S."/>
            <person name="Millburn G.H."/>
            <person name="Prochnik S.E."/>
            <person name="Smith C.D."/>
            <person name="Tupy J.L."/>
            <person name="Whitfield E.J."/>
            <person name="Bayraktaroglu L."/>
            <person name="Berman B.P."/>
            <person name="Bettencourt B.R."/>
            <person name="Celniker S.E."/>
            <person name="de Grey A.D.N.J."/>
            <person name="Drysdale R.A."/>
            <person name="Harris N.L."/>
            <person name="Richter J."/>
            <person name="Russo S."/>
            <person name="Schroeder A.J."/>
            <person name="Shu S.Q."/>
            <person name="Stapleton M."/>
            <person name="Yamada C."/>
            <person name="Ashburner M."/>
            <person name="Gelbart W.M."/>
            <person name="Rubin G.M."/>
            <person name="Lewis S.E."/>
        </authorList>
    </citation>
    <scope>GENOME REANNOTATION</scope>
    <source>
        <strain>Berkeley</strain>
    </source>
</reference>
<sequence>MVYESGFTTRRTYSSRPVTTSYAVTRTKRTPIDWEKVPFVPRPSLISDPVTAFGVRRPDLERRQRSILDPINRASIKPDYKLAYEPIEPYVSTRDKNRTRILGMVRQHIDTVEAGGNTAGRTFRDSLDAQLPRLHRAVSESLPVRRETYRNERSGAMVTKYSY</sequence>
<feature type="chain" id="PRO_0000438589" description="Uncharacterized protein CG45078">
    <location>
        <begin position="1"/>
        <end position="163"/>
    </location>
</feature>
<protein>
    <recommendedName>
        <fullName evidence="1">Uncharacterized protein CG45078</fullName>
    </recommendedName>
</protein>
<gene>
    <name evidence="2" type="ORF">CG45078</name>
</gene>
<dbReference type="EMBL" id="AE014297">
    <property type="protein sequence ID" value="AAF54552.1"/>
    <property type="molecule type" value="Genomic_DNA"/>
</dbReference>
<dbReference type="RefSeq" id="NP_731506.1">
    <property type="nucleotide sequence ID" value="NM_169362.4"/>
</dbReference>
<dbReference type="SMR" id="C0HK94"/>
<dbReference type="IntAct" id="C0HK94">
    <property type="interactions" value="3"/>
</dbReference>
<dbReference type="STRING" id="7227.FBpp0310817"/>
<dbReference type="EnsemblMetazoa" id="FBtr0344445">
    <property type="protein sequence ID" value="FBpp0310817"/>
    <property type="gene ID" value="FBgn0266448"/>
</dbReference>
<dbReference type="GeneID" id="19836061"/>
<dbReference type="KEGG" id="dme:Dmel_CG45078"/>
<dbReference type="AGR" id="FB:FBgn0266448"/>
<dbReference type="FlyBase" id="FBgn0266448">
    <property type="gene designation" value="CG45078"/>
</dbReference>
<dbReference type="VEuPathDB" id="VectorBase:FBgn0266448"/>
<dbReference type="InParanoid" id="C0HK94"/>
<dbReference type="OMA" id="VHNCEIK"/>
<dbReference type="OrthoDB" id="8194914at2759"/>
<dbReference type="BioGRID-ORCS" id="19836061">
    <property type="hits" value="0 hits in 1 CRISPR screen"/>
</dbReference>
<dbReference type="GenomeRNAi" id="19836061"/>
<dbReference type="PRO" id="PR:C0HK94"/>
<dbReference type="Proteomes" id="UP000000803">
    <property type="component" value="Chromosome 3R"/>
</dbReference>
<dbReference type="Bgee" id="FBgn0266448">
    <property type="expression patterns" value="Expressed in muscle cell in digestive tract and 62 other cell types or tissues"/>
</dbReference>
<dbReference type="ExpressionAtlas" id="C0HK94">
    <property type="expression patterns" value="baseline and differential"/>
</dbReference>
<evidence type="ECO:0000305" key="1"/>
<evidence type="ECO:0000312" key="2">
    <source>
        <dbReference type="FlyBase" id="FBgn0266448"/>
    </source>
</evidence>
<organism>
    <name type="scientific">Drosophila melanogaster</name>
    <name type="common">Fruit fly</name>
    <dbReference type="NCBI Taxonomy" id="7227"/>
    <lineage>
        <taxon>Eukaryota</taxon>
        <taxon>Metazoa</taxon>
        <taxon>Ecdysozoa</taxon>
        <taxon>Arthropoda</taxon>
        <taxon>Hexapoda</taxon>
        <taxon>Insecta</taxon>
        <taxon>Pterygota</taxon>
        <taxon>Neoptera</taxon>
        <taxon>Endopterygota</taxon>
        <taxon>Diptera</taxon>
        <taxon>Brachycera</taxon>
        <taxon>Muscomorpha</taxon>
        <taxon>Ephydroidea</taxon>
        <taxon>Drosophilidae</taxon>
        <taxon>Drosophila</taxon>
        <taxon>Sophophora</taxon>
    </lineage>
</organism>